<accession>P0C8N7</accession>
<accession>Q79V50</accession>
<accession>Q9X9T2</accession>
<organism>
    <name type="scientific">Synechococcus elongatus</name>
    <dbReference type="NCBI Taxonomy" id="32046"/>
    <lineage>
        <taxon>Bacteria</taxon>
        <taxon>Bacillati</taxon>
        <taxon>Cyanobacteriota</taxon>
        <taxon>Cyanophyceae</taxon>
        <taxon>Synechococcales</taxon>
        <taxon>Synechococcaceae</taxon>
        <taxon>Synechococcus</taxon>
    </lineage>
</organism>
<dbReference type="EC" id="7.1.1.6" evidence="1"/>
<dbReference type="EMBL" id="AJ243535">
    <property type="protein sequence ID" value="CAB46649.1"/>
    <property type="molecule type" value="Genomic_DNA"/>
</dbReference>
<dbReference type="SMR" id="P0C8N7"/>
<dbReference type="GO" id="GO:0031676">
    <property type="term" value="C:plasma membrane-derived thylakoid membrane"/>
    <property type="evidence" value="ECO:0007669"/>
    <property type="project" value="UniProtKB-SubCell"/>
</dbReference>
<dbReference type="GO" id="GO:0051537">
    <property type="term" value="F:2 iron, 2 sulfur cluster binding"/>
    <property type="evidence" value="ECO:0007669"/>
    <property type="project" value="UniProtKB-KW"/>
</dbReference>
<dbReference type="GO" id="GO:0045158">
    <property type="term" value="F:electron transporter, transferring electrons within cytochrome b6/f complex of photosystem II activity"/>
    <property type="evidence" value="ECO:0007669"/>
    <property type="project" value="UniProtKB-UniRule"/>
</dbReference>
<dbReference type="GO" id="GO:0046872">
    <property type="term" value="F:metal ion binding"/>
    <property type="evidence" value="ECO:0007669"/>
    <property type="project" value="UniProtKB-KW"/>
</dbReference>
<dbReference type="GO" id="GO:0004497">
    <property type="term" value="F:monooxygenase activity"/>
    <property type="evidence" value="ECO:0007669"/>
    <property type="project" value="UniProtKB-ARBA"/>
</dbReference>
<dbReference type="GO" id="GO:0016705">
    <property type="term" value="F:oxidoreductase activity, acting on paired donors, with incorporation or reduction of molecular oxygen"/>
    <property type="evidence" value="ECO:0007669"/>
    <property type="project" value="UniProtKB-ARBA"/>
</dbReference>
<dbReference type="GO" id="GO:0009496">
    <property type="term" value="F:plastoquinol--plastocyanin reductase activity"/>
    <property type="evidence" value="ECO:0007669"/>
    <property type="project" value="UniProtKB-UniRule"/>
</dbReference>
<dbReference type="GO" id="GO:0015979">
    <property type="term" value="P:photosynthesis"/>
    <property type="evidence" value="ECO:0007669"/>
    <property type="project" value="UniProtKB-UniRule"/>
</dbReference>
<dbReference type="CDD" id="cd03471">
    <property type="entry name" value="Rieske_cytochrome_b6f"/>
    <property type="match status" value="1"/>
</dbReference>
<dbReference type="FunFam" id="2.102.10.10:FF:000007">
    <property type="entry name" value="Cytochrome b6-f complex iron-sulfur subunit"/>
    <property type="match status" value="1"/>
</dbReference>
<dbReference type="Gene3D" id="2.102.10.10">
    <property type="entry name" value="Rieske [2Fe-2S] iron-sulphur domain"/>
    <property type="match status" value="1"/>
</dbReference>
<dbReference type="Gene3D" id="1.20.5.700">
    <property type="entry name" value="Single helix bin"/>
    <property type="match status" value="1"/>
</dbReference>
<dbReference type="HAMAP" id="MF_01335">
    <property type="entry name" value="Cytb6_f_Rieske"/>
    <property type="match status" value="1"/>
</dbReference>
<dbReference type="InterPro" id="IPR023960">
    <property type="entry name" value="Cyt_b6_f_Rieske"/>
</dbReference>
<dbReference type="InterPro" id="IPR017941">
    <property type="entry name" value="Rieske_2Fe-2S"/>
</dbReference>
<dbReference type="InterPro" id="IPR036922">
    <property type="entry name" value="Rieske_2Fe-2S_sf"/>
</dbReference>
<dbReference type="InterPro" id="IPR014349">
    <property type="entry name" value="Rieske_Fe-S_prot"/>
</dbReference>
<dbReference type="InterPro" id="IPR005805">
    <property type="entry name" value="Rieske_Fe-S_prot_C"/>
</dbReference>
<dbReference type="NCBIfam" id="NF045928">
    <property type="entry name" value="Cytb6fFeSPetC"/>
    <property type="match status" value="1"/>
</dbReference>
<dbReference type="NCBIfam" id="NF010001">
    <property type="entry name" value="PRK13474.1"/>
    <property type="match status" value="1"/>
</dbReference>
<dbReference type="PANTHER" id="PTHR10134">
    <property type="entry name" value="CYTOCHROME B-C1 COMPLEX SUBUNIT RIESKE, MITOCHONDRIAL"/>
    <property type="match status" value="1"/>
</dbReference>
<dbReference type="Pfam" id="PF00355">
    <property type="entry name" value="Rieske"/>
    <property type="match status" value="1"/>
</dbReference>
<dbReference type="Pfam" id="PF25471">
    <property type="entry name" value="TM_PetC"/>
    <property type="match status" value="1"/>
</dbReference>
<dbReference type="PRINTS" id="PR00162">
    <property type="entry name" value="RIESKE"/>
</dbReference>
<dbReference type="SUPFAM" id="SSF50022">
    <property type="entry name" value="ISP domain"/>
    <property type="match status" value="1"/>
</dbReference>
<dbReference type="PROSITE" id="PS51296">
    <property type="entry name" value="RIESKE"/>
    <property type="match status" value="1"/>
</dbReference>
<feature type="chain" id="PRO_0000127780" description="Cytochrome b6-f complex iron-sulfur subunit">
    <location>
        <begin position="1"/>
        <end position="180"/>
    </location>
</feature>
<feature type="transmembrane region" description="Helical" evidence="1">
    <location>
        <begin position="21"/>
        <end position="43"/>
    </location>
</feature>
<feature type="domain" description="Rieske" evidence="1">
    <location>
        <begin position="66"/>
        <end position="162"/>
    </location>
</feature>
<feature type="binding site" evidence="1">
    <location>
        <position position="108"/>
    </location>
    <ligand>
        <name>[2Fe-2S] cluster</name>
        <dbReference type="ChEBI" id="CHEBI:190135"/>
    </ligand>
</feature>
<feature type="binding site" evidence="1">
    <location>
        <position position="110"/>
    </location>
    <ligand>
        <name>[2Fe-2S] cluster</name>
        <dbReference type="ChEBI" id="CHEBI:190135"/>
    </ligand>
</feature>
<feature type="binding site" evidence="1">
    <location>
        <position position="126"/>
    </location>
    <ligand>
        <name>[2Fe-2S] cluster</name>
        <dbReference type="ChEBI" id="CHEBI:190135"/>
    </ligand>
</feature>
<feature type="binding site" evidence="1">
    <location>
        <position position="129"/>
    </location>
    <ligand>
        <name>[2Fe-2S] cluster</name>
        <dbReference type="ChEBI" id="CHEBI:190135"/>
    </ligand>
</feature>
<feature type="disulfide bond" evidence="1">
    <location>
        <begin position="113"/>
        <end position="128"/>
    </location>
</feature>
<name>UCRI_SYNEL</name>
<keyword id="KW-0001">2Fe-2S</keyword>
<keyword id="KW-1015">Disulfide bond</keyword>
<keyword id="KW-0249">Electron transport</keyword>
<keyword id="KW-0408">Iron</keyword>
<keyword id="KW-0411">Iron-sulfur</keyword>
<keyword id="KW-0472">Membrane</keyword>
<keyword id="KW-0479">Metal-binding</keyword>
<keyword id="KW-0793">Thylakoid</keyword>
<keyword id="KW-1278">Translocase</keyword>
<keyword id="KW-0812">Transmembrane</keyword>
<keyword id="KW-1133">Transmembrane helix</keyword>
<keyword id="KW-0813">Transport</keyword>
<protein>
    <recommendedName>
        <fullName evidence="1">Cytochrome b6-f complex iron-sulfur subunit</fullName>
        <ecNumber evidence="1">7.1.1.6</ecNumber>
    </recommendedName>
    <alternativeName>
        <fullName evidence="1">Plastohydroquinone:plastocyanin oxidoreductase iron-sulfur protein</fullName>
        <shortName evidence="1">ISP</shortName>
        <shortName evidence="1">RISP</shortName>
    </alternativeName>
    <alternativeName>
        <fullName evidence="1">Rieske iron-sulfur protein</fullName>
    </alternativeName>
</protein>
<sequence length="180" mass="19316">MAQVSGMSDVPDMGRRQFMNLLTFGTITGTALGALYPVVKYFIPPASGGTGGGAVAKDALGNDIKVSEYLAKHLPGDRSLAQGIKGDPTYVIVTEDHQIANYGLNAVCTHLGCVVPWNVSENKFICPCHGSQYDSTGKVVRGPAPLSLALVKATVTEDDKLVFTPWTEIDFRTGKEPWWT</sequence>
<comment type="function">
    <text evidence="1">Component of the cytochrome b6-f complex, which mediates electron transfer between photosystem II (PSII) and photosystem I (PSI), cyclic electron flow around PSI, and state transitions.</text>
</comment>
<comment type="catalytic activity">
    <reaction evidence="1">
        <text>2 oxidized [plastocyanin] + a plastoquinol + 2 H(+)(in) = 2 reduced [plastocyanin] + a plastoquinone + 4 H(+)(out)</text>
        <dbReference type="Rhea" id="RHEA:22148"/>
        <dbReference type="Rhea" id="RHEA-COMP:9561"/>
        <dbReference type="Rhea" id="RHEA-COMP:9562"/>
        <dbReference type="Rhea" id="RHEA-COMP:10039"/>
        <dbReference type="Rhea" id="RHEA-COMP:10040"/>
        <dbReference type="ChEBI" id="CHEBI:15378"/>
        <dbReference type="ChEBI" id="CHEBI:17757"/>
        <dbReference type="ChEBI" id="CHEBI:29036"/>
        <dbReference type="ChEBI" id="CHEBI:49552"/>
        <dbReference type="ChEBI" id="CHEBI:62192"/>
        <dbReference type="EC" id="7.1.1.6"/>
    </reaction>
</comment>
<comment type="cofactor">
    <cofactor evidence="1">
        <name>[2Fe-2S] cluster</name>
        <dbReference type="ChEBI" id="CHEBI:190135"/>
    </cofactor>
    <text evidence="1">Binds 1 [2Fe-2S] cluster per subunit.</text>
</comment>
<comment type="subunit">
    <text evidence="1">The 4 large subunits of the cytochrome b6-f complex are cytochrome b6, subunit IV (17 kDa polypeptide, PetD), cytochrome f and the Rieske protein, while the 4 small subunits are PetG, PetL, PetM and PetN. The complex functions as a dimer.</text>
</comment>
<comment type="subcellular location">
    <subcellularLocation>
        <location evidence="1">Cellular thylakoid membrane</location>
        <topology evidence="1">Single-pass membrane protein</topology>
    </subcellularLocation>
    <text evidence="1">The transmembrane helix obliquely spans the membrane in one monomer, and its extrinsic C-terminal domain is part of the other monomer.</text>
</comment>
<comment type="miscellaneous">
    <text>The Rieske iron-sulfur protein is a high potential 2Fe-2S protein.</text>
</comment>
<comment type="similarity">
    <text evidence="1">Belongs to the Rieske iron-sulfur protein family.</text>
</comment>
<evidence type="ECO:0000255" key="1">
    <source>
        <dbReference type="HAMAP-Rule" id="MF_01335"/>
    </source>
</evidence>
<proteinExistence type="inferred from homology"/>
<gene>
    <name evidence="1" type="primary">petC</name>
</gene>
<reference key="1">
    <citation type="journal article" date="2000" name="Biochim. Biophys. Acta">
        <title>Sequence of the two operons encoding the four core subunits of the cytochrome b6f complex from the thermophilic cyanobacterium Synechococcus elongatus.</title>
        <authorList>
            <person name="Schneider D."/>
            <person name="Altenfeld U."/>
            <person name="Thomas H."/>
            <person name="Schrader S."/>
            <person name="Muehlenhoff U."/>
            <person name="Roegner M."/>
        </authorList>
    </citation>
    <scope>NUCLEOTIDE SEQUENCE [GENOMIC DNA]</scope>
</reference>